<proteinExistence type="inferred from homology"/>
<protein>
    <recommendedName>
        <fullName evidence="1">UPF0178 protein YaiI</fullName>
    </recommendedName>
</protein>
<feature type="chain" id="PRO_1000197835" description="UPF0178 protein YaiI">
    <location>
        <begin position="1"/>
        <end position="151"/>
    </location>
</feature>
<sequence>MTIWVDADACPNVIKEILYRAAERMQLPLILVANQALRVPPSRFIRTLRVAAGFDVADNEIVRQCEAGDLVITADIPLAAEVLEKGAAALNPRGERYSDATIRERLTMCDFMDTLRASGVQTGGPNTLSPRDRQHFAAELDKWWLESQRKK</sequence>
<comment type="similarity">
    <text evidence="1">Belongs to the UPF0178 family.</text>
</comment>
<name>YAII_SALPC</name>
<accession>C0Q7R0</accession>
<gene>
    <name evidence="1" type="primary">yaiI</name>
    <name type="ordered locus">SPC_0397</name>
</gene>
<evidence type="ECO:0000255" key="1">
    <source>
        <dbReference type="HAMAP-Rule" id="MF_00489"/>
    </source>
</evidence>
<dbReference type="EMBL" id="CP000857">
    <property type="protein sequence ID" value="ACN44580.1"/>
    <property type="molecule type" value="Genomic_DNA"/>
</dbReference>
<dbReference type="RefSeq" id="WP_000158133.1">
    <property type="nucleotide sequence ID" value="NC_012125.1"/>
</dbReference>
<dbReference type="KEGG" id="sei:SPC_0397"/>
<dbReference type="HOGENOM" id="CLU_106619_1_0_6"/>
<dbReference type="Proteomes" id="UP000001599">
    <property type="component" value="Chromosome"/>
</dbReference>
<dbReference type="CDD" id="cd18720">
    <property type="entry name" value="PIN_YqxD-like"/>
    <property type="match status" value="1"/>
</dbReference>
<dbReference type="HAMAP" id="MF_00489">
    <property type="entry name" value="UPF0178"/>
    <property type="match status" value="1"/>
</dbReference>
<dbReference type="InterPro" id="IPR003791">
    <property type="entry name" value="UPF0178"/>
</dbReference>
<dbReference type="NCBIfam" id="NF001095">
    <property type="entry name" value="PRK00124.1"/>
    <property type="match status" value="1"/>
</dbReference>
<dbReference type="PANTHER" id="PTHR35146">
    <property type="entry name" value="UPF0178 PROTEIN YAII"/>
    <property type="match status" value="1"/>
</dbReference>
<dbReference type="PANTHER" id="PTHR35146:SF1">
    <property type="entry name" value="UPF0178 PROTEIN YAII"/>
    <property type="match status" value="1"/>
</dbReference>
<dbReference type="Pfam" id="PF02639">
    <property type="entry name" value="DUF188"/>
    <property type="match status" value="1"/>
</dbReference>
<reference key="1">
    <citation type="journal article" date="2009" name="PLoS ONE">
        <title>Salmonella paratyphi C: genetic divergence from Salmonella choleraesuis and pathogenic convergence with Salmonella typhi.</title>
        <authorList>
            <person name="Liu W.-Q."/>
            <person name="Feng Y."/>
            <person name="Wang Y."/>
            <person name="Zou Q.-H."/>
            <person name="Chen F."/>
            <person name="Guo J.-T."/>
            <person name="Peng Y.-H."/>
            <person name="Jin Y."/>
            <person name="Li Y.-G."/>
            <person name="Hu S.-N."/>
            <person name="Johnston R.N."/>
            <person name="Liu G.-R."/>
            <person name="Liu S.-L."/>
        </authorList>
    </citation>
    <scope>NUCLEOTIDE SEQUENCE [LARGE SCALE GENOMIC DNA]</scope>
    <source>
        <strain>RKS4594</strain>
    </source>
</reference>
<organism>
    <name type="scientific">Salmonella paratyphi C (strain RKS4594)</name>
    <dbReference type="NCBI Taxonomy" id="476213"/>
    <lineage>
        <taxon>Bacteria</taxon>
        <taxon>Pseudomonadati</taxon>
        <taxon>Pseudomonadota</taxon>
        <taxon>Gammaproteobacteria</taxon>
        <taxon>Enterobacterales</taxon>
        <taxon>Enterobacteriaceae</taxon>
        <taxon>Salmonella</taxon>
    </lineage>
</organism>